<evidence type="ECO:0000255" key="1"/>
<accession>P73836</accession>
<sequence>MKQIIPALITLSFSPMAIAALPPQYQNVKDLEAMVNYVKENPDVAATLKSIDLENQTINYGQDCQVTFERKPSPKPLGWAGPAELLQFKAINCPRE</sequence>
<proteinExistence type="inferred from homology"/>
<organism>
    <name type="scientific">Synechocystis sp. (strain ATCC 27184 / PCC 6803 / Kazusa)</name>
    <dbReference type="NCBI Taxonomy" id="1111708"/>
    <lineage>
        <taxon>Bacteria</taxon>
        <taxon>Bacillati</taxon>
        <taxon>Cyanobacteriota</taxon>
        <taxon>Cyanophyceae</taxon>
        <taxon>Synechococcales</taxon>
        <taxon>Merismopediaceae</taxon>
        <taxon>Synechocystis</taxon>
    </lineage>
</organism>
<name>Y3402_SYNY3</name>
<feature type="signal peptide" evidence="1">
    <location>
        <begin position="1"/>
        <end position="19"/>
    </location>
</feature>
<feature type="chain" id="PRO_0000014237" description="Uncharacterized protein ssr3402">
    <location>
        <begin position="20"/>
        <end position="96"/>
    </location>
</feature>
<dbReference type="EMBL" id="BA000022">
    <property type="protein sequence ID" value="BAA17893.1"/>
    <property type="molecule type" value="Genomic_DNA"/>
</dbReference>
<dbReference type="PIR" id="S75031">
    <property type="entry name" value="S75031"/>
</dbReference>
<dbReference type="STRING" id="1148.gene:10498762"/>
<dbReference type="PaxDb" id="1148-1652976"/>
<dbReference type="EnsemblBacteria" id="BAA17893">
    <property type="protein sequence ID" value="BAA17893"/>
    <property type="gene ID" value="BAA17893"/>
</dbReference>
<dbReference type="KEGG" id="syn:ssr3402"/>
<dbReference type="eggNOG" id="ENOG5032ZSV">
    <property type="taxonomic scope" value="Bacteria"/>
</dbReference>
<dbReference type="InParanoid" id="P73836"/>
<dbReference type="Proteomes" id="UP000001425">
    <property type="component" value="Chromosome"/>
</dbReference>
<reference key="1">
    <citation type="journal article" date="1996" name="DNA Res.">
        <title>Sequence analysis of the genome of the unicellular cyanobacterium Synechocystis sp. strain PCC6803. II. Sequence determination of the entire genome and assignment of potential protein-coding regions.</title>
        <authorList>
            <person name="Kaneko T."/>
            <person name="Sato S."/>
            <person name="Kotani H."/>
            <person name="Tanaka A."/>
            <person name="Asamizu E."/>
            <person name="Nakamura Y."/>
            <person name="Miyajima N."/>
            <person name="Hirosawa M."/>
            <person name="Sugiura M."/>
            <person name="Sasamoto S."/>
            <person name="Kimura T."/>
            <person name="Hosouchi T."/>
            <person name="Matsuno A."/>
            <person name="Muraki A."/>
            <person name="Nakazaki N."/>
            <person name="Naruo K."/>
            <person name="Okumura S."/>
            <person name="Shimpo S."/>
            <person name="Takeuchi C."/>
            <person name="Wada T."/>
            <person name="Watanabe A."/>
            <person name="Yamada M."/>
            <person name="Yasuda M."/>
            <person name="Tabata S."/>
        </authorList>
    </citation>
    <scope>NUCLEOTIDE SEQUENCE [LARGE SCALE GENOMIC DNA]</scope>
    <source>
        <strain>ATCC 27184 / PCC 6803 / Kazusa</strain>
    </source>
</reference>
<protein>
    <recommendedName>
        <fullName>Uncharacterized protein ssr3402</fullName>
    </recommendedName>
</protein>
<keyword id="KW-1185">Reference proteome</keyword>
<keyword id="KW-0732">Signal</keyword>
<gene>
    <name type="ordered locus">ssr3402</name>
</gene>